<name>Y827_RICTY</name>
<reference key="1">
    <citation type="journal article" date="2004" name="J. Bacteriol.">
        <title>Complete genome sequence of Rickettsia typhi and comparison with sequences of other Rickettsiae.</title>
        <authorList>
            <person name="McLeod M.P."/>
            <person name="Qin X."/>
            <person name="Karpathy S.E."/>
            <person name="Gioia J."/>
            <person name="Highlander S.K."/>
            <person name="Fox G.E."/>
            <person name="McNeill T.Z."/>
            <person name="Jiang H."/>
            <person name="Muzny D."/>
            <person name="Jacob L.S."/>
            <person name="Hawes A.C."/>
            <person name="Sodergren E."/>
            <person name="Gill R."/>
            <person name="Hume J."/>
            <person name="Morgan M."/>
            <person name="Fan G."/>
            <person name="Amin A.G."/>
            <person name="Gibbs R.A."/>
            <person name="Hong C."/>
            <person name="Yu X.-J."/>
            <person name="Walker D.H."/>
            <person name="Weinstock G.M."/>
        </authorList>
    </citation>
    <scope>NUCLEOTIDE SEQUENCE [LARGE SCALE GENOMIC DNA]</scope>
    <source>
        <strain>ATCC VR-144 / Wilmington</strain>
    </source>
</reference>
<sequence length="105" mass="12198">MNKFYIYNNFKNEALINIKVKPYSKQNLINNFVIINNIPYIKLSITAAPEQGKANEGIINYLAKEWKLSRSSIEIIKGHTHSLKTILIKNINEDYLNLIINSYIK</sequence>
<accession>Q68Y09</accession>
<comment type="similarity">
    <text evidence="1">Belongs to the UPF0235 family.</text>
</comment>
<evidence type="ECO:0000255" key="1">
    <source>
        <dbReference type="HAMAP-Rule" id="MF_00634"/>
    </source>
</evidence>
<gene>
    <name type="ordered locus">RT0827</name>
</gene>
<organism>
    <name type="scientific">Rickettsia typhi (strain ATCC VR-144 / Wilmington)</name>
    <dbReference type="NCBI Taxonomy" id="257363"/>
    <lineage>
        <taxon>Bacteria</taxon>
        <taxon>Pseudomonadati</taxon>
        <taxon>Pseudomonadota</taxon>
        <taxon>Alphaproteobacteria</taxon>
        <taxon>Rickettsiales</taxon>
        <taxon>Rickettsiaceae</taxon>
        <taxon>Rickettsieae</taxon>
        <taxon>Rickettsia</taxon>
        <taxon>typhus group</taxon>
    </lineage>
</organism>
<feature type="chain" id="PRO_0000278002" description="UPF0235 protein RT0827">
    <location>
        <begin position="1"/>
        <end position="105"/>
    </location>
</feature>
<dbReference type="EMBL" id="AE017197">
    <property type="protein sequence ID" value="AAU04281.1"/>
    <property type="molecule type" value="Genomic_DNA"/>
</dbReference>
<dbReference type="RefSeq" id="WP_011191255.1">
    <property type="nucleotide sequence ID" value="NC_006142.1"/>
</dbReference>
<dbReference type="SMR" id="Q68Y09"/>
<dbReference type="KEGG" id="rty:RT0827"/>
<dbReference type="eggNOG" id="COG1872">
    <property type="taxonomic scope" value="Bacteria"/>
</dbReference>
<dbReference type="HOGENOM" id="CLU_130694_6_2_5"/>
<dbReference type="OrthoDB" id="9801972at2"/>
<dbReference type="Proteomes" id="UP000000604">
    <property type="component" value="Chromosome"/>
</dbReference>
<dbReference type="GO" id="GO:0005737">
    <property type="term" value="C:cytoplasm"/>
    <property type="evidence" value="ECO:0007669"/>
    <property type="project" value="TreeGrafter"/>
</dbReference>
<dbReference type="Gene3D" id="3.30.1200.10">
    <property type="entry name" value="YggU-like"/>
    <property type="match status" value="1"/>
</dbReference>
<dbReference type="HAMAP" id="MF_00634">
    <property type="entry name" value="UPF0235"/>
    <property type="match status" value="1"/>
</dbReference>
<dbReference type="InterPro" id="IPR003746">
    <property type="entry name" value="DUF167"/>
</dbReference>
<dbReference type="InterPro" id="IPR036591">
    <property type="entry name" value="YggU-like_sf"/>
</dbReference>
<dbReference type="NCBIfam" id="TIGR00251">
    <property type="entry name" value="DUF167 family protein"/>
    <property type="match status" value="1"/>
</dbReference>
<dbReference type="NCBIfam" id="NF002419">
    <property type="entry name" value="PRK01530.1"/>
    <property type="match status" value="1"/>
</dbReference>
<dbReference type="PANTHER" id="PTHR13420">
    <property type="entry name" value="UPF0235 PROTEIN C15ORF40"/>
    <property type="match status" value="1"/>
</dbReference>
<dbReference type="PANTHER" id="PTHR13420:SF7">
    <property type="entry name" value="UPF0235 PROTEIN C15ORF40"/>
    <property type="match status" value="1"/>
</dbReference>
<dbReference type="Pfam" id="PF02594">
    <property type="entry name" value="DUF167"/>
    <property type="match status" value="1"/>
</dbReference>
<dbReference type="SMART" id="SM01152">
    <property type="entry name" value="DUF167"/>
    <property type="match status" value="1"/>
</dbReference>
<dbReference type="SUPFAM" id="SSF69786">
    <property type="entry name" value="YggU-like"/>
    <property type="match status" value="1"/>
</dbReference>
<proteinExistence type="inferred from homology"/>
<protein>
    <recommendedName>
        <fullName evidence="1">UPF0235 protein RT0827</fullName>
    </recommendedName>
</protein>